<protein>
    <recommendedName>
        <fullName evidence="1">Pyridoxal 5'-phosphate synthase subunit PdxS</fullName>
        <shortName evidence="1">PLP synthase subunit PdxS</shortName>
        <ecNumber evidence="1">4.3.3.6</ecNumber>
    </recommendedName>
    <alternativeName>
        <fullName evidence="1">Pdx1</fullName>
    </alternativeName>
</protein>
<accession>A7WYT1</accession>
<dbReference type="EC" id="4.3.3.6" evidence="1"/>
<dbReference type="EMBL" id="AP009324">
    <property type="protein sequence ID" value="BAF77399.1"/>
    <property type="molecule type" value="Genomic_DNA"/>
</dbReference>
<dbReference type="RefSeq" id="WP_000034728.1">
    <property type="nucleotide sequence ID" value="NZ_CTYB01000013.1"/>
</dbReference>
<dbReference type="PDB" id="8U7J">
    <property type="method" value="X-ray"/>
    <property type="resolution" value="3.02 A"/>
    <property type="chains" value="A/B/C/D/E/F/G/H/I/J/K/L=1-295"/>
</dbReference>
<dbReference type="PDBsum" id="8U7J"/>
<dbReference type="SMR" id="A7WYT1"/>
<dbReference type="GeneID" id="66838811"/>
<dbReference type="KEGG" id="saw:SAHV_0516"/>
<dbReference type="HOGENOM" id="CLU_055352_1_0_9"/>
<dbReference type="UniPathway" id="UPA00245"/>
<dbReference type="GO" id="GO:0036381">
    <property type="term" value="F:pyridoxal 5'-phosphate synthase (glutamine hydrolysing) activity"/>
    <property type="evidence" value="ECO:0007669"/>
    <property type="project" value="UniProtKB-UniRule"/>
</dbReference>
<dbReference type="GO" id="GO:0006520">
    <property type="term" value="P:amino acid metabolic process"/>
    <property type="evidence" value="ECO:0007669"/>
    <property type="project" value="TreeGrafter"/>
</dbReference>
<dbReference type="GO" id="GO:0042823">
    <property type="term" value="P:pyridoxal phosphate biosynthetic process"/>
    <property type="evidence" value="ECO:0007669"/>
    <property type="project" value="UniProtKB-UniRule"/>
</dbReference>
<dbReference type="GO" id="GO:0008615">
    <property type="term" value="P:pyridoxine biosynthetic process"/>
    <property type="evidence" value="ECO:0007669"/>
    <property type="project" value="TreeGrafter"/>
</dbReference>
<dbReference type="CDD" id="cd04727">
    <property type="entry name" value="pdxS"/>
    <property type="match status" value="1"/>
</dbReference>
<dbReference type="FunFam" id="3.20.20.70:FF:000001">
    <property type="entry name" value="Pyridoxine biosynthesis protein PDX1"/>
    <property type="match status" value="1"/>
</dbReference>
<dbReference type="Gene3D" id="3.20.20.70">
    <property type="entry name" value="Aldolase class I"/>
    <property type="match status" value="1"/>
</dbReference>
<dbReference type="HAMAP" id="MF_01824">
    <property type="entry name" value="PdxS"/>
    <property type="match status" value="1"/>
</dbReference>
<dbReference type="InterPro" id="IPR013785">
    <property type="entry name" value="Aldolase_TIM"/>
</dbReference>
<dbReference type="InterPro" id="IPR001852">
    <property type="entry name" value="PdxS/SNZ"/>
</dbReference>
<dbReference type="InterPro" id="IPR033755">
    <property type="entry name" value="PdxS/SNZ_N"/>
</dbReference>
<dbReference type="InterPro" id="IPR011060">
    <property type="entry name" value="RibuloseP-bd_barrel"/>
</dbReference>
<dbReference type="NCBIfam" id="NF003215">
    <property type="entry name" value="PRK04180.1"/>
    <property type="match status" value="1"/>
</dbReference>
<dbReference type="NCBIfam" id="TIGR00343">
    <property type="entry name" value="pyridoxal 5'-phosphate synthase lyase subunit PdxS"/>
    <property type="match status" value="1"/>
</dbReference>
<dbReference type="PANTHER" id="PTHR31829">
    <property type="entry name" value="PYRIDOXAL 5'-PHOSPHATE SYNTHASE SUBUNIT SNZ1-RELATED"/>
    <property type="match status" value="1"/>
</dbReference>
<dbReference type="PANTHER" id="PTHR31829:SF0">
    <property type="entry name" value="PYRIDOXAL 5'-PHOSPHATE SYNTHASE SUBUNIT SNZ1-RELATED"/>
    <property type="match status" value="1"/>
</dbReference>
<dbReference type="Pfam" id="PF01680">
    <property type="entry name" value="SOR_SNZ"/>
    <property type="match status" value="1"/>
</dbReference>
<dbReference type="PIRSF" id="PIRSF029271">
    <property type="entry name" value="Pdx1"/>
    <property type="match status" value="1"/>
</dbReference>
<dbReference type="SUPFAM" id="SSF51366">
    <property type="entry name" value="Ribulose-phoshate binding barrel"/>
    <property type="match status" value="1"/>
</dbReference>
<dbReference type="PROSITE" id="PS01235">
    <property type="entry name" value="PDXS_SNZ_1"/>
    <property type="match status" value="1"/>
</dbReference>
<dbReference type="PROSITE" id="PS51129">
    <property type="entry name" value="PDXS_SNZ_2"/>
    <property type="match status" value="1"/>
</dbReference>
<reference key="1">
    <citation type="journal article" date="2008" name="Antimicrob. Agents Chemother.">
        <title>Mutated response regulator graR is responsible for phenotypic conversion of Staphylococcus aureus from heterogeneous vancomycin-intermediate resistance to vancomycin-intermediate resistance.</title>
        <authorList>
            <person name="Neoh H.-M."/>
            <person name="Cui L."/>
            <person name="Yuzawa H."/>
            <person name="Takeuchi F."/>
            <person name="Matsuo M."/>
            <person name="Hiramatsu K."/>
        </authorList>
    </citation>
    <scope>NUCLEOTIDE SEQUENCE [LARGE SCALE GENOMIC DNA]</scope>
    <source>
        <strain>Mu3 / ATCC 700698</strain>
    </source>
</reference>
<gene>
    <name evidence="1" type="primary">pdxS</name>
    <name type="ordered locus">SAHV_0516</name>
</gene>
<name>PDXS_STAA1</name>
<feature type="chain" id="PRO_1000070395" description="Pyridoxal 5'-phosphate synthase subunit PdxS">
    <location>
        <begin position="1"/>
        <end position="295"/>
    </location>
</feature>
<feature type="active site" description="Schiff-base intermediate with D-ribose 5-phosphate" evidence="1">
    <location>
        <position position="82"/>
    </location>
</feature>
<feature type="binding site" evidence="1">
    <location>
        <position position="25"/>
    </location>
    <ligand>
        <name>D-ribose 5-phosphate</name>
        <dbReference type="ChEBI" id="CHEBI:78346"/>
    </ligand>
</feature>
<feature type="binding site" evidence="1">
    <location>
        <position position="154"/>
    </location>
    <ligand>
        <name>D-ribose 5-phosphate</name>
        <dbReference type="ChEBI" id="CHEBI:78346"/>
    </ligand>
</feature>
<feature type="binding site" evidence="1">
    <location>
        <position position="166"/>
    </location>
    <ligand>
        <name>D-glyceraldehyde 3-phosphate</name>
        <dbReference type="ChEBI" id="CHEBI:59776"/>
    </ligand>
</feature>
<feature type="binding site" evidence="1">
    <location>
        <position position="215"/>
    </location>
    <ligand>
        <name>D-ribose 5-phosphate</name>
        <dbReference type="ChEBI" id="CHEBI:78346"/>
    </ligand>
</feature>
<feature type="binding site" evidence="1">
    <location>
        <begin position="236"/>
        <end position="237"/>
    </location>
    <ligand>
        <name>D-ribose 5-phosphate</name>
        <dbReference type="ChEBI" id="CHEBI:78346"/>
    </ligand>
</feature>
<keyword id="KW-0002">3D-structure</keyword>
<keyword id="KW-0456">Lyase</keyword>
<keyword id="KW-0663">Pyridoxal phosphate</keyword>
<keyword id="KW-0704">Schiff base</keyword>
<comment type="function">
    <text evidence="1">Catalyzes the formation of pyridoxal 5'-phosphate from ribose 5-phosphate (RBP), glyceraldehyde 3-phosphate (G3P) and ammonia. The ammonia is provided by the PdxT subunit. Can also use ribulose 5-phosphate and dihydroxyacetone phosphate as substrates, resulting from enzyme-catalyzed isomerization of RBP and G3P, respectively.</text>
</comment>
<comment type="catalytic activity">
    <reaction evidence="1">
        <text>aldehydo-D-ribose 5-phosphate + D-glyceraldehyde 3-phosphate + L-glutamine = pyridoxal 5'-phosphate + L-glutamate + phosphate + 3 H2O + H(+)</text>
        <dbReference type="Rhea" id="RHEA:31507"/>
        <dbReference type="ChEBI" id="CHEBI:15377"/>
        <dbReference type="ChEBI" id="CHEBI:15378"/>
        <dbReference type="ChEBI" id="CHEBI:29985"/>
        <dbReference type="ChEBI" id="CHEBI:43474"/>
        <dbReference type="ChEBI" id="CHEBI:58273"/>
        <dbReference type="ChEBI" id="CHEBI:58359"/>
        <dbReference type="ChEBI" id="CHEBI:59776"/>
        <dbReference type="ChEBI" id="CHEBI:597326"/>
        <dbReference type="EC" id="4.3.3.6"/>
    </reaction>
</comment>
<comment type="pathway">
    <text evidence="1">Cofactor biosynthesis; pyridoxal 5'-phosphate biosynthesis.</text>
</comment>
<comment type="subunit">
    <text evidence="1">In the presence of PdxT, forms a dodecamer of heterodimers.</text>
</comment>
<comment type="similarity">
    <text evidence="1">Belongs to the PdxS/SNZ family.</text>
</comment>
<evidence type="ECO:0000255" key="1">
    <source>
        <dbReference type="HAMAP-Rule" id="MF_01824"/>
    </source>
</evidence>
<proteinExistence type="evidence at protein level"/>
<sequence>MSKIIGSDRVKRGMAEMQKGGVIMDVVNAEQARIAEEAGAVAVMALERVPSDIRAAGGVARMANPKIVEEVMNAVSIPVMAKARIGHITEARVLEAMGVDYIDESEVLTPADEEYHLRKDQFTVPFVCGCRNLGEAARRIGEGAAMLRTKGEPGTGNIVEAVRHMRQVNSEVSRLTVMNDDEIMTFAKDIGAPYEILKQIKDNGRLPVVNFAAGGVATPQDAALMMELGADGVFVGSGIFKSEDPEKFAKAIVQATTHYQDYELIGRLASELGTAMKGLDINQLSLEERMQERGW</sequence>
<organism>
    <name type="scientific">Staphylococcus aureus (strain Mu3 / ATCC 700698)</name>
    <dbReference type="NCBI Taxonomy" id="418127"/>
    <lineage>
        <taxon>Bacteria</taxon>
        <taxon>Bacillati</taxon>
        <taxon>Bacillota</taxon>
        <taxon>Bacilli</taxon>
        <taxon>Bacillales</taxon>
        <taxon>Staphylococcaceae</taxon>
        <taxon>Staphylococcus</taxon>
    </lineage>
</organism>